<proteinExistence type="inferred from homology"/>
<name>TRMD_VIBC3</name>
<gene>
    <name evidence="1" type="primary">trmD</name>
    <name type="ordered locus">VC0395_A0097</name>
    <name type="ordered locus">VC395_0580</name>
</gene>
<protein>
    <recommendedName>
        <fullName evidence="1">tRNA (guanine-N(1)-)-methyltransferase</fullName>
        <ecNumber evidence="1">2.1.1.228</ecNumber>
    </recommendedName>
    <alternativeName>
        <fullName evidence="1">M1G-methyltransferase</fullName>
    </alternativeName>
    <alternativeName>
        <fullName evidence="1">tRNA [GM37] methyltransferase</fullName>
    </alternativeName>
</protein>
<comment type="function">
    <text evidence="1">Specifically methylates guanosine-37 in various tRNAs.</text>
</comment>
<comment type="catalytic activity">
    <reaction evidence="1">
        <text>guanosine(37) in tRNA + S-adenosyl-L-methionine = N(1)-methylguanosine(37) in tRNA + S-adenosyl-L-homocysteine + H(+)</text>
        <dbReference type="Rhea" id="RHEA:36899"/>
        <dbReference type="Rhea" id="RHEA-COMP:10145"/>
        <dbReference type="Rhea" id="RHEA-COMP:10147"/>
        <dbReference type="ChEBI" id="CHEBI:15378"/>
        <dbReference type="ChEBI" id="CHEBI:57856"/>
        <dbReference type="ChEBI" id="CHEBI:59789"/>
        <dbReference type="ChEBI" id="CHEBI:73542"/>
        <dbReference type="ChEBI" id="CHEBI:74269"/>
        <dbReference type="EC" id="2.1.1.228"/>
    </reaction>
</comment>
<comment type="subunit">
    <text evidence="1">Homodimer.</text>
</comment>
<comment type="subcellular location">
    <subcellularLocation>
        <location evidence="1">Cytoplasm</location>
    </subcellularLocation>
</comment>
<comment type="similarity">
    <text evidence="1">Belongs to the RNA methyltransferase TrmD family.</text>
</comment>
<sequence length="247" mass="27807">MWVGIVSLFPEMFRSVTDFGVTGQAVKKGLLSVEAWNPRDFAHDKRRTVDDKPYGGGPGMLMMVQPLRDAIHAAKQASPGKTKVIYLSPQGRKLDQQGVEELAQNQNLILICGRYEGVDERIIESEVDEEWSIGDFVMTGGELPAMTLIDSVSRFIPGVLGDFASAEEDSFANGLLDCPHYTRPEVLDGKEVPAVLKSGNHEDIRRWRLKQSLGRTWLRRPELLENLALTDEQEQLLTEYIKETRHQ</sequence>
<reference key="1">
    <citation type="submission" date="2007-03" db="EMBL/GenBank/DDBJ databases">
        <authorList>
            <person name="Heidelberg J."/>
        </authorList>
    </citation>
    <scope>NUCLEOTIDE SEQUENCE [LARGE SCALE GENOMIC DNA]</scope>
    <source>
        <strain>ATCC 39541 / Classical Ogawa 395 / O395</strain>
    </source>
</reference>
<reference key="2">
    <citation type="journal article" date="2008" name="PLoS ONE">
        <title>A recalibrated molecular clock and independent origins for the cholera pandemic clones.</title>
        <authorList>
            <person name="Feng L."/>
            <person name="Reeves P.R."/>
            <person name="Lan R."/>
            <person name="Ren Y."/>
            <person name="Gao C."/>
            <person name="Zhou Z."/>
            <person name="Ren Y."/>
            <person name="Cheng J."/>
            <person name="Wang W."/>
            <person name="Wang J."/>
            <person name="Qian W."/>
            <person name="Li D."/>
            <person name="Wang L."/>
        </authorList>
    </citation>
    <scope>NUCLEOTIDE SEQUENCE [LARGE SCALE GENOMIC DNA]</scope>
    <source>
        <strain>ATCC 39541 / Classical Ogawa 395 / O395</strain>
    </source>
</reference>
<dbReference type="EC" id="2.1.1.228" evidence="1"/>
<dbReference type="EMBL" id="CP000627">
    <property type="protein sequence ID" value="ABQ21733.1"/>
    <property type="molecule type" value="Genomic_DNA"/>
</dbReference>
<dbReference type="EMBL" id="CP001235">
    <property type="protein sequence ID" value="ACP08599.1"/>
    <property type="molecule type" value="Genomic_DNA"/>
</dbReference>
<dbReference type="RefSeq" id="WP_000270017.1">
    <property type="nucleotide sequence ID" value="NZ_JAACZH010000006.1"/>
</dbReference>
<dbReference type="SMR" id="A5F9A9"/>
<dbReference type="GeneID" id="89515278"/>
<dbReference type="KEGG" id="vco:VC0395_A0097"/>
<dbReference type="KEGG" id="vcr:VC395_0580"/>
<dbReference type="PATRIC" id="fig|345073.21.peg.568"/>
<dbReference type="eggNOG" id="COG0336">
    <property type="taxonomic scope" value="Bacteria"/>
</dbReference>
<dbReference type="HOGENOM" id="CLU_047363_0_1_6"/>
<dbReference type="OrthoDB" id="9807416at2"/>
<dbReference type="Proteomes" id="UP000000249">
    <property type="component" value="Chromosome 2"/>
</dbReference>
<dbReference type="GO" id="GO:0005829">
    <property type="term" value="C:cytosol"/>
    <property type="evidence" value="ECO:0007669"/>
    <property type="project" value="TreeGrafter"/>
</dbReference>
<dbReference type="GO" id="GO:0052906">
    <property type="term" value="F:tRNA (guanine(37)-N1)-methyltransferase activity"/>
    <property type="evidence" value="ECO:0007669"/>
    <property type="project" value="UniProtKB-UniRule"/>
</dbReference>
<dbReference type="GO" id="GO:0002939">
    <property type="term" value="P:tRNA N1-guanine methylation"/>
    <property type="evidence" value="ECO:0007669"/>
    <property type="project" value="TreeGrafter"/>
</dbReference>
<dbReference type="CDD" id="cd18080">
    <property type="entry name" value="TrmD-like"/>
    <property type="match status" value="1"/>
</dbReference>
<dbReference type="FunFam" id="1.10.1270.20:FF:000001">
    <property type="entry name" value="tRNA (guanine-N(1)-)-methyltransferase"/>
    <property type="match status" value="1"/>
</dbReference>
<dbReference type="FunFam" id="3.40.1280.10:FF:000001">
    <property type="entry name" value="tRNA (guanine-N(1)-)-methyltransferase"/>
    <property type="match status" value="1"/>
</dbReference>
<dbReference type="Gene3D" id="3.40.1280.10">
    <property type="match status" value="1"/>
</dbReference>
<dbReference type="Gene3D" id="1.10.1270.20">
    <property type="entry name" value="tRNA(m1g37)methyltransferase, domain 2"/>
    <property type="match status" value="1"/>
</dbReference>
<dbReference type="HAMAP" id="MF_00605">
    <property type="entry name" value="TrmD"/>
    <property type="match status" value="1"/>
</dbReference>
<dbReference type="InterPro" id="IPR029028">
    <property type="entry name" value="Alpha/beta_knot_MTases"/>
</dbReference>
<dbReference type="InterPro" id="IPR023148">
    <property type="entry name" value="tRNA_m1G_MeTrfase_C_sf"/>
</dbReference>
<dbReference type="InterPro" id="IPR002649">
    <property type="entry name" value="tRNA_m1G_MeTrfase_TrmD"/>
</dbReference>
<dbReference type="InterPro" id="IPR029026">
    <property type="entry name" value="tRNA_m1G_MTases_N"/>
</dbReference>
<dbReference type="InterPro" id="IPR016009">
    <property type="entry name" value="tRNA_MeTrfase_TRMD/TRM10"/>
</dbReference>
<dbReference type="NCBIfam" id="NF000648">
    <property type="entry name" value="PRK00026.1"/>
    <property type="match status" value="1"/>
</dbReference>
<dbReference type="NCBIfam" id="TIGR00088">
    <property type="entry name" value="trmD"/>
    <property type="match status" value="1"/>
</dbReference>
<dbReference type="PANTHER" id="PTHR46417">
    <property type="entry name" value="TRNA (GUANINE-N(1)-)-METHYLTRANSFERASE"/>
    <property type="match status" value="1"/>
</dbReference>
<dbReference type="PANTHER" id="PTHR46417:SF1">
    <property type="entry name" value="TRNA (GUANINE-N(1)-)-METHYLTRANSFERASE"/>
    <property type="match status" value="1"/>
</dbReference>
<dbReference type="Pfam" id="PF01746">
    <property type="entry name" value="tRNA_m1G_MT"/>
    <property type="match status" value="1"/>
</dbReference>
<dbReference type="PIRSF" id="PIRSF000386">
    <property type="entry name" value="tRNA_mtase"/>
    <property type="match status" value="1"/>
</dbReference>
<dbReference type="SUPFAM" id="SSF75217">
    <property type="entry name" value="alpha/beta knot"/>
    <property type="match status" value="1"/>
</dbReference>
<keyword id="KW-0963">Cytoplasm</keyword>
<keyword id="KW-0489">Methyltransferase</keyword>
<keyword id="KW-0949">S-adenosyl-L-methionine</keyword>
<keyword id="KW-0808">Transferase</keyword>
<keyword id="KW-0819">tRNA processing</keyword>
<accession>A5F9A9</accession>
<accession>C3LX89</accession>
<evidence type="ECO:0000255" key="1">
    <source>
        <dbReference type="HAMAP-Rule" id="MF_00605"/>
    </source>
</evidence>
<feature type="chain" id="PRO_1000072644" description="tRNA (guanine-N(1)-)-methyltransferase">
    <location>
        <begin position="1"/>
        <end position="247"/>
    </location>
</feature>
<feature type="binding site" evidence="1">
    <location>
        <position position="113"/>
    </location>
    <ligand>
        <name>S-adenosyl-L-methionine</name>
        <dbReference type="ChEBI" id="CHEBI:59789"/>
    </ligand>
</feature>
<feature type="binding site" evidence="1">
    <location>
        <begin position="133"/>
        <end position="138"/>
    </location>
    <ligand>
        <name>S-adenosyl-L-methionine</name>
        <dbReference type="ChEBI" id="CHEBI:59789"/>
    </ligand>
</feature>
<organism>
    <name type="scientific">Vibrio cholerae serotype O1 (strain ATCC 39541 / Classical Ogawa 395 / O395)</name>
    <dbReference type="NCBI Taxonomy" id="345073"/>
    <lineage>
        <taxon>Bacteria</taxon>
        <taxon>Pseudomonadati</taxon>
        <taxon>Pseudomonadota</taxon>
        <taxon>Gammaproteobacteria</taxon>
        <taxon>Vibrionales</taxon>
        <taxon>Vibrionaceae</taxon>
        <taxon>Vibrio</taxon>
    </lineage>
</organism>